<sequence length="1018" mass="115597">MSHLRSVAAKLKPYCTGLLVKHNSILRTLPPRCYVYSSGAKEPFLSGTNSSYVEEMYYAWLENPKSVHKSWDAFFRSADNGTPQCEIQGVPSLADIESKLPSLSSQGLATAPAKAEKIVEEHLAVQSLIRAYQIRGHHVAQLDPLGILDADLDSFVPSDLITTLDKLGFYGLHEGDLDKVFRLPTTTYIGGTDSTLSLREIIRRLENSYCQHIGLEFMFINDVEQCQWIRQKFETPGIMKFINEEKRTLLARLIRSTRFEDFLARKWSSEKRFGLEGCEVMIPALKAIIDKSSEMGLEYVILGMPHRGRLNVLANVIRKDLDQIFCQFDPKLEASDEGSGDVKYHLGMYHERINRATNKKITLSLVANPSHLEAVDPVVQGKTKAEQFYRGDTEGNKVMSILVHGDAAFAGQGVVYETFHLSDLPSYTTNGTIHIVVNNQIGFTTDPRMARSSPYPTDVARVVNAPIFHVNADDPEAVMYVCSVAAEWRNTFNKDVVVDLVCYRRSGHNEMDEPMFTQPLMYKQIHKQVPVLKKYADKMIAEGTVTLQEFEEEIAKYDRICEEAYARSKDKKILNIKHWLDSPWPGFFTLDGEPKSMTCPPTGIPEDMLSHIGAIASSVPLKDFKIHGGLSRILKSRLEMTNSRTVDWALAEYMTFGSLLKEGIHVRLSGQDVERGTFSHRHHVLHDQEVDRWTCVPMNHLWPNQAPYTVCNSSLSEYGVLGFELGFAMASPNALVLWEAQFGDFYNTAQCIIDQFISSGQAKWVRHNGIVLLLPHGMEGMGPEHSSARPERFLQMSNDDSDAYPEFTQDFDVSQLFDCNWIVVNCSNPASYFHVLRRQILLPFRKPLIIFTPKSLLRHPEAKSSFDDMKTGTNFQRVIPENGAASHSPQEVKRVIFCTGKVYYELVKERHRKGLDSQVAITRLEQISPFPFDLVKQEAEKYATSELVWCQEEHKNMGYYDYVKARFLTILNHARPVWYVGRDPAAAPATGNKNTHHVELRRFLDIAFDLEYFEGKPF</sequence>
<keyword id="KW-0106">Calcium</keyword>
<keyword id="KW-0324">Glycolysis</keyword>
<keyword id="KW-0460">Magnesium</keyword>
<keyword id="KW-0479">Metal-binding</keyword>
<keyword id="KW-0496">Mitochondrion</keyword>
<keyword id="KW-0560">Oxidoreductase</keyword>
<keyword id="KW-1185">Reference proteome</keyword>
<keyword id="KW-0786">Thiamine pyrophosphate</keyword>
<keyword id="KW-0809">Transit peptide</keyword>
<evidence type="ECO:0000250" key="1">
    <source>
        <dbReference type="UniProtKB" id="D3ZQD3"/>
    </source>
</evidence>
<evidence type="ECO:0000250" key="2">
    <source>
        <dbReference type="UniProtKB" id="Q02218"/>
    </source>
</evidence>
<evidence type="ECO:0000250" key="3">
    <source>
        <dbReference type="UniProtKB" id="Q9ULD0"/>
    </source>
</evidence>
<evidence type="ECO:0000255" key="4"/>
<evidence type="ECO:0000305" key="5"/>
<accession>Q68EW0</accession>
<name>OGDHL_XENLA</name>
<organism>
    <name type="scientific">Xenopus laevis</name>
    <name type="common">African clawed frog</name>
    <dbReference type="NCBI Taxonomy" id="8355"/>
    <lineage>
        <taxon>Eukaryota</taxon>
        <taxon>Metazoa</taxon>
        <taxon>Chordata</taxon>
        <taxon>Craniata</taxon>
        <taxon>Vertebrata</taxon>
        <taxon>Euteleostomi</taxon>
        <taxon>Amphibia</taxon>
        <taxon>Batrachia</taxon>
        <taxon>Anura</taxon>
        <taxon>Pipoidea</taxon>
        <taxon>Pipidae</taxon>
        <taxon>Xenopodinae</taxon>
        <taxon>Xenopus</taxon>
        <taxon>Xenopus</taxon>
    </lineage>
</organism>
<reference key="1">
    <citation type="submission" date="2004-08" db="EMBL/GenBank/DDBJ databases">
        <authorList>
            <consortium name="NIH - Xenopus Gene Collection (XGC) project"/>
        </authorList>
    </citation>
    <scope>NUCLEOTIDE SEQUENCE [LARGE SCALE MRNA]</scope>
    <source>
        <tissue>Brain</tissue>
    </source>
</reference>
<comment type="function">
    <text evidence="1 3">2-oxoglutarate dehydrogenase (E1-like) component of the 2-oxoglutarate dehydrogenase multienzyme complex (OGDHC) which mediates the decarboxylation of alpha-ketoglutarate in the tricarboxylic acid cycle. The OGDHC complex catalyzes the overall conversion of 2-oxoglutarate to succinyl-CoA and CO(2) while reducing NAD(+) to NADH. The OGDHC complex is mainly active in the mitochondrion (By similarity). Involved in the inhibition of cell proliferation and in apoptosis (By similarity).</text>
</comment>
<comment type="catalytic activity">
    <reaction evidence="1">
        <text>N(6)-[(R)-lipoyl]-L-lysyl-[protein] + 2-oxoglutarate + H(+) = N(6)-[(R)-S(8)-succinyldihydrolipoyl]-L-lysyl-[protein] + CO2</text>
        <dbReference type="Rhea" id="RHEA:12188"/>
        <dbReference type="Rhea" id="RHEA-COMP:10474"/>
        <dbReference type="Rhea" id="RHEA-COMP:20092"/>
        <dbReference type="ChEBI" id="CHEBI:15378"/>
        <dbReference type="ChEBI" id="CHEBI:16526"/>
        <dbReference type="ChEBI" id="CHEBI:16810"/>
        <dbReference type="ChEBI" id="CHEBI:83099"/>
        <dbReference type="ChEBI" id="CHEBI:83120"/>
        <dbReference type="EC" id="1.2.4.2"/>
    </reaction>
    <physiologicalReaction direction="left-to-right" evidence="1">
        <dbReference type="Rhea" id="RHEA:12189"/>
    </physiologicalReaction>
</comment>
<comment type="cofactor">
    <cofactor evidence="2">
        <name>thiamine diphosphate</name>
        <dbReference type="ChEBI" id="CHEBI:58937"/>
    </cofactor>
    <cofactor evidence="2">
        <name>Mg(2+)</name>
        <dbReference type="ChEBI" id="CHEBI:18420"/>
    </cofactor>
</comment>
<comment type="subunit">
    <text evidence="1">The OGDHC complex comprises multiple copies of three catalytic enzyme components, the 2-oxoglutarate dehydrogenase (OGDH/E1), the dihydrolipoamide dehydrogenase (DLST/E2) and the dihydrolipoamide dehydrogenase (DLD/E3). OGDHL/E1-like isoenzyme may replace OGDH in the OGDHC complex in the brain.</text>
</comment>
<comment type="subcellular location">
    <subcellularLocation>
        <location evidence="3">Mitochondrion matrix</location>
    </subcellularLocation>
</comment>
<comment type="similarity">
    <text evidence="5">Belongs to the alpha-ketoglutarate dehydrogenase family.</text>
</comment>
<feature type="transit peptide" description="Mitochondrion" evidence="4">
    <location>
        <begin position="1"/>
        <end status="unknown"/>
    </location>
</feature>
<feature type="chain" id="PRO_0000310985" description="2-oxoglutarate dehydrogenase-like, mitochondrial">
    <location>
        <begin position="74"/>
        <end position="1018"/>
    </location>
</feature>
<feature type="binding site" evidence="2">
    <location>
        <position position="138"/>
    </location>
    <ligand>
        <name>Ca(2+)</name>
        <dbReference type="ChEBI" id="CHEBI:29108"/>
    </ligand>
</feature>
<feature type="binding site" evidence="2">
    <location>
        <position position="151"/>
    </location>
    <ligand>
        <name>Ca(2+)</name>
        <dbReference type="ChEBI" id="CHEBI:29108"/>
    </ligand>
</feature>
<feature type="binding site" evidence="2">
    <location>
        <position position="153"/>
    </location>
    <ligand>
        <name>Ca(2+)</name>
        <dbReference type="ChEBI" id="CHEBI:29108"/>
    </ligand>
</feature>
<feature type="binding site" evidence="2">
    <location>
        <position position="307"/>
    </location>
    <ligand>
        <name>thiamine diphosphate</name>
        <dbReference type="ChEBI" id="CHEBI:58937"/>
    </ligand>
</feature>
<feature type="binding site" evidence="2">
    <location>
        <position position="406"/>
    </location>
    <ligand>
        <name>Mg(2+)</name>
        <dbReference type="ChEBI" id="CHEBI:18420"/>
    </ligand>
</feature>
<feature type="binding site" evidence="2">
    <location>
        <position position="406"/>
    </location>
    <ligand>
        <name>thiamine diphosphate</name>
        <dbReference type="ChEBI" id="CHEBI:58937"/>
    </ligand>
</feature>
<feature type="binding site" evidence="2">
    <location>
        <position position="439"/>
    </location>
    <ligand>
        <name>Mg(2+)</name>
        <dbReference type="ChEBI" id="CHEBI:18420"/>
    </ligand>
</feature>
<feature type="binding site" evidence="2">
    <location>
        <position position="439"/>
    </location>
    <ligand>
        <name>thiamine diphosphate</name>
        <dbReference type="ChEBI" id="CHEBI:58937"/>
    </ligand>
</feature>
<feature type="binding site" evidence="2">
    <location>
        <position position="441"/>
    </location>
    <ligand>
        <name>Mg(2+)</name>
        <dbReference type="ChEBI" id="CHEBI:18420"/>
    </ligand>
</feature>
<feature type="binding site" evidence="2">
    <location>
        <position position="441"/>
    </location>
    <ligand>
        <name>thiamine diphosphate</name>
        <dbReference type="ChEBI" id="CHEBI:58937"/>
    </ligand>
</feature>
<feature type="binding site" evidence="2">
    <location>
        <position position="671"/>
    </location>
    <ligand>
        <name>thiamine diphosphate</name>
        <dbReference type="ChEBI" id="CHEBI:58937"/>
    </ligand>
</feature>
<gene>
    <name type="primary">ogdhl</name>
</gene>
<dbReference type="EC" id="1.2.4.2" evidence="1"/>
<dbReference type="EMBL" id="BC080090">
    <property type="protein sequence ID" value="AAH80090.1"/>
    <property type="molecule type" value="mRNA"/>
</dbReference>
<dbReference type="RefSeq" id="NP_001087546.1">
    <property type="nucleotide sequence ID" value="NM_001094077.1"/>
</dbReference>
<dbReference type="SMR" id="Q68EW0"/>
<dbReference type="GeneID" id="447370"/>
<dbReference type="KEGG" id="xla:447370"/>
<dbReference type="AGR" id="Xenbase:XB-GENE-984155"/>
<dbReference type="CTD" id="447370"/>
<dbReference type="Xenbase" id="XB-GENE-984155">
    <property type="gene designation" value="ogdhl.L"/>
</dbReference>
<dbReference type="OrthoDB" id="413077at2759"/>
<dbReference type="Proteomes" id="UP000186698">
    <property type="component" value="Chromosome 7L"/>
</dbReference>
<dbReference type="Bgee" id="447370">
    <property type="expression patterns" value="Expressed in muscle tissue and 20 other cell types or tissues"/>
</dbReference>
<dbReference type="GO" id="GO:0005759">
    <property type="term" value="C:mitochondrial matrix"/>
    <property type="evidence" value="ECO:0000250"/>
    <property type="project" value="UniProtKB"/>
</dbReference>
<dbReference type="GO" id="GO:0005739">
    <property type="term" value="C:mitochondrion"/>
    <property type="evidence" value="ECO:0000318"/>
    <property type="project" value="GO_Central"/>
</dbReference>
<dbReference type="GO" id="GO:0045252">
    <property type="term" value="C:oxoglutarate dehydrogenase complex"/>
    <property type="evidence" value="ECO:0000318"/>
    <property type="project" value="GO_Central"/>
</dbReference>
<dbReference type="GO" id="GO:0046872">
    <property type="term" value="F:metal ion binding"/>
    <property type="evidence" value="ECO:0007669"/>
    <property type="project" value="UniProtKB-KW"/>
</dbReference>
<dbReference type="GO" id="GO:0004591">
    <property type="term" value="F:oxoglutarate dehydrogenase (succinyl-transferring) activity"/>
    <property type="evidence" value="ECO:0000318"/>
    <property type="project" value="GO_Central"/>
</dbReference>
<dbReference type="GO" id="GO:0030976">
    <property type="term" value="F:thiamine pyrophosphate binding"/>
    <property type="evidence" value="ECO:0007669"/>
    <property type="project" value="InterPro"/>
</dbReference>
<dbReference type="GO" id="GO:0006103">
    <property type="term" value="P:2-oxoglutarate metabolic process"/>
    <property type="evidence" value="ECO:0000250"/>
    <property type="project" value="UniProtKB"/>
</dbReference>
<dbReference type="GO" id="GO:0006096">
    <property type="term" value="P:glycolytic process"/>
    <property type="evidence" value="ECO:0007669"/>
    <property type="project" value="UniProtKB-KW"/>
</dbReference>
<dbReference type="GO" id="GO:0006099">
    <property type="term" value="P:tricarboxylic acid cycle"/>
    <property type="evidence" value="ECO:0000250"/>
    <property type="project" value="UniProtKB"/>
</dbReference>
<dbReference type="CDD" id="cd02016">
    <property type="entry name" value="TPP_E1_OGDC_like"/>
    <property type="match status" value="1"/>
</dbReference>
<dbReference type="FunFam" id="3.40.50.970:FF:000002">
    <property type="entry name" value="2-oxoglutarate dehydrogenase, E1 component"/>
    <property type="match status" value="1"/>
</dbReference>
<dbReference type="FunFam" id="1.10.287.1150:FF:000001">
    <property type="entry name" value="2-oxoglutarate dehydrogenase, mitochondrial isoform X1"/>
    <property type="match status" value="1"/>
</dbReference>
<dbReference type="FunFam" id="3.40.50.12470:FF:000001">
    <property type="entry name" value="2-oxoglutarate dehydrogenase, mitochondrial isoform X1"/>
    <property type="match status" value="1"/>
</dbReference>
<dbReference type="Gene3D" id="3.40.50.12470">
    <property type="match status" value="1"/>
</dbReference>
<dbReference type="Gene3D" id="3.40.50.970">
    <property type="match status" value="1"/>
</dbReference>
<dbReference type="Gene3D" id="3.40.50.11610">
    <property type="entry name" value="Multifunctional 2-oxoglutarate metabolism enzyme, C-terminal domain"/>
    <property type="match status" value="1"/>
</dbReference>
<dbReference type="Gene3D" id="1.10.287.1150">
    <property type="entry name" value="TPP helical domain"/>
    <property type="match status" value="1"/>
</dbReference>
<dbReference type="InterPro" id="IPR032106">
    <property type="entry name" value="2-oxogl_dehyd_N"/>
</dbReference>
<dbReference type="InterPro" id="IPR011603">
    <property type="entry name" value="2oxoglutarate_DH_E1"/>
</dbReference>
<dbReference type="InterPro" id="IPR001017">
    <property type="entry name" value="DH_E1"/>
</dbReference>
<dbReference type="InterPro" id="IPR042179">
    <property type="entry name" value="KGD_C_sf"/>
</dbReference>
<dbReference type="InterPro" id="IPR031717">
    <property type="entry name" value="ODO-1/KGD_C"/>
</dbReference>
<dbReference type="InterPro" id="IPR029061">
    <property type="entry name" value="THDP-binding"/>
</dbReference>
<dbReference type="InterPro" id="IPR005475">
    <property type="entry name" value="Transketolase-like_Pyr-bd"/>
</dbReference>
<dbReference type="NCBIfam" id="TIGR00239">
    <property type="entry name" value="2oxo_dh_E1"/>
    <property type="match status" value="1"/>
</dbReference>
<dbReference type="NCBIfam" id="NF006914">
    <property type="entry name" value="PRK09404.1"/>
    <property type="match status" value="1"/>
</dbReference>
<dbReference type="NCBIfam" id="NF008907">
    <property type="entry name" value="PRK12270.1"/>
    <property type="match status" value="1"/>
</dbReference>
<dbReference type="PANTHER" id="PTHR23152">
    <property type="entry name" value="2-OXOGLUTARATE DEHYDROGENASE"/>
    <property type="match status" value="1"/>
</dbReference>
<dbReference type="PANTHER" id="PTHR23152:SF5">
    <property type="entry name" value="2-OXOGLUTARATE DEHYDROGENASE-LIKE, MITOCHONDRIAL"/>
    <property type="match status" value="1"/>
</dbReference>
<dbReference type="Pfam" id="PF16078">
    <property type="entry name" value="2-oxogl_dehyd_N"/>
    <property type="match status" value="1"/>
</dbReference>
<dbReference type="Pfam" id="PF00676">
    <property type="entry name" value="E1_dh"/>
    <property type="match status" value="1"/>
</dbReference>
<dbReference type="Pfam" id="PF16870">
    <property type="entry name" value="OxoGdeHyase_C"/>
    <property type="match status" value="1"/>
</dbReference>
<dbReference type="Pfam" id="PF02779">
    <property type="entry name" value="Transket_pyr"/>
    <property type="match status" value="1"/>
</dbReference>
<dbReference type="PIRSF" id="PIRSF000157">
    <property type="entry name" value="Oxoglu_dh_E1"/>
    <property type="match status" value="1"/>
</dbReference>
<dbReference type="SMART" id="SM00861">
    <property type="entry name" value="Transket_pyr"/>
    <property type="match status" value="1"/>
</dbReference>
<dbReference type="SUPFAM" id="SSF52518">
    <property type="entry name" value="Thiamin diphosphate-binding fold (THDP-binding)"/>
    <property type="match status" value="2"/>
</dbReference>
<proteinExistence type="evidence at transcript level"/>
<protein>
    <recommendedName>
        <fullName evidence="1">2-oxoglutarate dehydrogenase-like, mitochondrial</fullName>
        <ecNumber evidence="1">1.2.4.2</ecNumber>
    </recommendedName>
    <alternativeName>
        <fullName evidence="1">2-oxoglutarate dehydrogenase complex component E1-like</fullName>
        <shortName evidence="1">OGDC-E1-like</shortName>
    </alternativeName>
    <alternativeName>
        <fullName>Alpha-ketoglutarate dehydrogenase-like</fullName>
    </alternativeName>
</protein>